<dbReference type="EC" id="2.7.7.6" evidence="1"/>
<dbReference type="EMBL" id="AY673996">
    <property type="protein sequence ID" value="AAT79767.1"/>
    <property type="molecule type" value="Genomic_DNA"/>
</dbReference>
<dbReference type="RefSeq" id="YP_063692.1">
    <property type="nucleotide sequence ID" value="NC_006137.1"/>
</dbReference>
<dbReference type="SMR" id="Q6B8L8"/>
<dbReference type="GeneID" id="2943983"/>
<dbReference type="GO" id="GO:0009507">
    <property type="term" value="C:chloroplast"/>
    <property type="evidence" value="ECO:0007669"/>
    <property type="project" value="UniProtKB-SubCell"/>
</dbReference>
<dbReference type="GO" id="GO:0000428">
    <property type="term" value="C:DNA-directed RNA polymerase complex"/>
    <property type="evidence" value="ECO:0007669"/>
    <property type="project" value="UniProtKB-KW"/>
</dbReference>
<dbReference type="GO" id="GO:0005739">
    <property type="term" value="C:mitochondrion"/>
    <property type="evidence" value="ECO:0007669"/>
    <property type="project" value="GOC"/>
</dbReference>
<dbReference type="GO" id="GO:0003677">
    <property type="term" value="F:DNA binding"/>
    <property type="evidence" value="ECO:0007669"/>
    <property type="project" value="UniProtKB-UniRule"/>
</dbReference>
<dbReference type="GO" id="GO:0003899">
    <property type="term" value="F:DNA-directed RNA polymerase activity"/>
    <property type="evidence" value="ECO:0007669"/>
    <property type="project" value="UniProtKB-UniRule"/>
</dbReference>
<dbReference type="GO" id="GO:0006351">
    <property type="term" value="P:DNA-templated transcription"/>
    <property type="evidence" value="ECO:0007669"/>
    <property type="project" value="UniProtKB-UniRule"/>
</dbReference>
<dbReference type="HAMAP" id="MF_00366">
    <property type="entry name" value="RNApol_bact_RpoZ"/>
    <property type="match status" value="1"/>
</dbReference>
<dbReference type="InterPro" id="IPR003716">
    <property type="entry name" value="DNA-dir_RNA_pol_omega"/>
</dbReference>
<dbReference type="InterPro" id="IPR036161">
    <property type="entry name" value="RPB6/omega-like_sf"/>
</dbReference>
<dbReference type="NCBIfam" id="NF001574">
    <property type="entry name" value="PRK00392.2-5"/>
    <property type="match status" value="1"/>
</dbReference>
<dbReference type="SUPFAM" id="SSF63562">
    <property type="entry name" value="RPB6/omega subunit-like"/>
    <property type="match status" value="1"/>
</dbReference>
<proteinExistence type="inferred from homology"/>
<protein>
    <recommendedName>
        <fullName evidence="1">Putative DNA-directed RNA polymerase subunit omega</fullName>
        <shortName evidence="1">PEP</shortName>
        <ecNumber evidence="1">2.7.7.6</ecNumber>
    </recommendedName>
    <alternativeName>
        <fullName evidence="1">Plastid-encoded RNA polymerase omega subunit</fullName>
        <shortName evidence="1">RNA polymerase omega subunit</shortName>
    </alternativeName>
</protein>
<geneLocation type="chloroplast"/>
<name>RPOZ_GRATL</name>
<organism>
    <name type="scientific">Gracilaria tenuistipitata var. liui</name>
    <name type="common">Red alga</name>
    <dbReference type="NCBI Taxonomy" id="285951"/>
    <lineage>
        <taxon>Eukaryota</taxon>
        <taxon>Rhodophyta</taxon>
        <taxon>Florideophyceae</taxon>
        <taxon>Rhodymeniophycidae</taxon>
        <taxon>Gracilariales</taxon>
        <taxon>Gracilariaceae</taxon>
        <taxon>Gracilaria</taxon>
        <taxon>Gracilaria tenuistipitata</taxon>
    </lineage>
</organism>
<comment type="function">
    <text evidence="1">May be involved in RNA polymerase activity.</text>
</comment>
<comment type="catalytic activity">
    <reaction evidence="1">
        <text>RNA(n) + a ribonucleoside 5'-triphosphate = RNA(n+1) + diphosphate</text>
        <dbReference type="Rhea" id="RHEA:21248"/>
        <dbReference type="Rhea" id="RHEA-COMP:14527"/>
        <dbReference type="Rhea" id="RHEA-COMP:17342"/>
        <dbReference type="ChEBI" id="CHEBI:33019"/>
        <dbReference type="ChEBI" id="CHEBI:61557"/>
        <dbReference type="ChEBI" id="CHEBI:140395"/>
        <dbReference type="EC" id="2.7.7.6"/>
    </reaction>
</comment>
<comment type="subcellular location">
    <subcellularLocation>
        <location>Plastid</location>
        <location>Chloroplast</location>
    </subcellularLocation>
</comment>
<comment type="similarity">
    <text evidence="1">Belongs to the RNA polymerase subunit omega family.</text>
</comment>
<keyword id="KW-0150">Chloroplast</keyword>
<keyword id="KW-0240">DNA-directed RNA polymerase</keyword>
<keyword id="KW-0548">Nucleotidyltransferase</keyword>
<keyword id="KW-0934">Plastid</keyword>
<keyword id="KW-0804">Transcription</keyword>
<keyword id="KW-0808">Transferase</keyword>
<evidence type="ECO:0000255" key="1">
    <source>
        <dbReference type="HAMAP-Rule" id="MF_00366"/>
    </source>
</evidence>
<sequence length="80" mass="9538">MDNQNIKIYNHLKVHEIIYKTEELLNISDNRYKITIQIANRAKRKKYEDLDIIDDPTIKPIIRSILEMVDEITQPEIISD</sequence>
<reference key="1">
    <citation type="journal article" date="2004" name="J. Mol. Evol.">
        <title>Comparative analysis of the complete plastid genome sequence of the red alga Gracilaria tenuistipitata var. liui provides insights into the evolution of rhodoplasts and their relationship to other plastids.</title>
        <authorList>
            <person name="Hagopian J.C."/>
            <person name="Reis M."/>
            <person name="Kitajima J.P."/>
            <person name="Bhattacharya D."/>
            <person name="de Oliveira M.C."/>
        </authorList>
    </citation>
    <scope>NUCLEOTIDE SEQUENCE [LARGE SCALE GENOMIC DNA]</scope>
</reference>
<accession>Q6B8L8</accession>
<feature type="chain" id="PRO_0000129022" description="Putative DNA-directed RNA polymerase subunit omega">
    <location>
        <begin position="1"/>
        <end position="80"/>
    </location>
</feature>
<gene>
    <name evidence="1" type="primary">rpoZ</name>
    <name type="synonym">ycf61</name>
    <name type="ordered locus">Grc000186</name>
</gene>